<proteinExistence type="inferred from homology"/>
<feature type="chain" id="PRO_0000122125" description="Serine--tRNA ligase">
    <location>
        <begin position="1"/>
        <end position="428"/>
    </location>
</feature>
<feature type="binding site" evidence="1">
    <location>
        <begin position="231"/>
        <end position="233"/>
    </location>
    <ligand>
        <name>L-serine</name>
        <dbReference type="ChEBI" id="CHEBI:33384"/>
    </ligand>
</feature>
<feature type="binding site" evidence="1">
    <location>
        <begin position="262"/>
        <end position="264"/>
    </location>
    <ligand>
        <name>ATP</name>
        <dbReference type="ChEBI" id="CHEBI:30616"/>
    </ligand>
</feature>
<feature type="binding site" evidence="1">
    <location>
        <position position="285"/>
    </location>
    <ligand>
        <name>L-serine</name>
        <dbReference type="ChEBI" id="CHEBI:33384"/>
    </ligand>
</feature>
<feature type="binding site" evidence="1">
    <location>
        <begin position="349"/>
        <end position="352"/>
    </location>
    <ligand>
        <name>ATP</name>
        <dbReference type="ChEBI" id="CHEBI:30616"/>
    </ligand>
</feature>
<feature type="binding site" evidence="1">
    <location>
        <position position="385"/>
    </location>
    <ligand>
        <name>L-serine</name>
        <dbReference type="ChEBI" id="CHEBI:33384"/>
    </ligand>
</feature>
<accession>Q8CU95</accession>
<evidence type="ECO:0000255" key="1">
    <source>
        <dbReference type="HAMAP-Rule" id="MF_00176"/>
    </source>
</evidence>
<reference key="1">
    <citation type="journal article" date="2003" name="Mol. Microbiol.">
        <title>Genome-based analysis of virulence genes in a non-biofilm-forming Staphylococcus epidermidis strain (ATCC 12228).</title>
        <authorList>
            <person name="Zhang Y.-Q."/>
            <person name="Ren S.-X."/>
            <person name="Li H.-L."/>
            <person name="Wang Y.-X."/>
            <person name="Fu G."/>
            <person name="Yang J."/>
            <person name="Qin Z.-Q."/>
            <person name="Miao Y.-G."/>
            <person name="Wang W.-Y."/>
            <person name="Chen R.-S."/>
            <person name="Shen Y."/>
            <person name="Chen Z."/>
            <person name="Yuan Z.-H."/>
            <person name="Zhao G.-P."/>
            <person name="Qu D."/>
            <person name="Danchin A."/>
            <person name="Wen Y.-M."/>
        </authorList>
    </citation>
    <scope>NUCLEOTIDE SEQUENCE [LARGE SCALE GENOMIC DNA]</scope>
    <source>
        <strain>ATCC 12228 / FDA PCI 1200</strain>
    </source>
</reference>
<keyword id="KW-0030">Aminoacyl-tRNA synthetase</keyword>
<keyword id="KW-0067">ATP-binding</keyword>
<keyword id="KW-0963">Cytoplasm</keyword>
<keyword id="KW-0436">Ligase</keyword>
<keyword id="KW-0547">Nucleotide-binding</keyword>
<keyword id="KW-0648">Protein biosynthesis</keyword>
<comment type="function">
    <text evidence="1">Catalyzes the attachment of serine to tRNA(Ser). Is also able to aminoacylate tRNA(Sec) with serine, to form the misacylated tRNA L-seryl-tRNA(Sec), which will be further converted into selenocysteinyl-tRNA(Sec).</text>
</comment>
<comment type="catalytic activity">
    <reaction evidence="1">
        <text>tRNA(Ser) + L-serine + ATP = L-seryl-tRNA(Ser) + AMP + diphosphate + H(+)</text>
        <dbReference type="Rhea" id="RHEA:12292"/>
        <dbReference type="Rhea" id="RHEA-COMP:9669"/>
        <dbReference type="Rhea" id="RHEA-COMP:9703"/>
        <dbReference type="ChEBI" id="CHEBI:15378"/>
        <dbReference type="ChEBI" id="CHEBI:30616"/>
        <dbReference type="ChEBI" id="CHEBI:33019"/>
        <dbReference type="ChEBI" id="CHEBI:33384"/>
        <dbReference type="ChEBI" id="CHEBI:78442"/>
        <dbReference type="ChEBI" id="CHEBI:78533"/>
        <dbReference type="ChEBI" id="CHEBI:456215"/>
        <dbReference type="EC" id="6.1.1.11"/>
    </reaction>
</comment>
<comment type="catalytic activity">
    <reaction evidence="1">
        <text>tRNA(Sec) + L-serine + ATP = L-seryl-tRNA(Sec) + AMP + diphosphate + H(+)</text>
        <dbReference type="Rhea" id="RHEA:42580"/>
        <dbReference type="Rhea" id="RHEA-COMP:9742"/>
        <dbReference type="Rhea" id="RHEA-COMP:10128"/>
        <dbReference type="ChEBI" id="CHEBI:15378"/>
        <dbReference type="ChEBI" id="CHEBI:30616"/>
        <dbReference type="ChEBI" id="CHEBI:33019"/>
        <dbReference type="ChEBI" id="CHEBI:33384"/>
        <dbReference type="ChEBI" id="CHEBI:78442"/>
        <dbReference type="ChEBI" id="CHEBI:78533"/>
        <dbReference type="ChEBI" id="CHEBI:456215"/>
        <dbReference type="EC" id="6.1.1.11"/>
    </reaction>
</comment>
<comment type="pathway">
    <text evidence="1">Aminoacyl-tRNA biosynthesis; selenocysteinyl-tRNA(Sec) biosynthesis; L-seryl-tRNA(Sec) from L-serine and tRNA(Sec): step 1/1.</text>
</comment>
<comment type="subunit">
    <text evidence="1">Homodimer. The tRNA molecule binds across the dimer.</text>
</comment>
<comment type="subcellular location">
    <subcellularLocation>
        <location evidence="1">Cytoplasm</location>
    </subcellularLocation>
</comment>
<comment type="domain">
    <text evidence="1">Consists of two distinct domains, a catalytic core and a N-terminal extension that is involved in tRNA binding.</text>
</comment>
<comment type="similarity">
    <text evidence="1">Belongs to the class-II aminoacyl-tRNA synthetase family. Type-1 seryl-tRNA synthetase subfamily.</text>
</comment>
<sequence>MLDIRLFRNEPEKVKSKIELRGDDPKVVDQVLELDEQRRELISKTEEMKAKRNKVSEEIAQKKRNKEDADDVIAEMRHLGDEIKDIDNQLNEVDNKIRDILIRIPNLINEDVPQGASDEENVEVKKWGTPRDFEFEPKAHWDLVEELKMADFERAAKVSGARFVYLTKDGALLERALMNYMLTKHTTQHGYTEMMTPQLVNADTMFGTGQLPKFEEDLFKVEKEGLYTIPTAEVPLTNFYRDEIIQPGVLPELFTAQTACFRSEAGSAGRDTRGLIRLHQFDKVEMVRIVQPEDSWDALEEMTQNAEAILEELGLPYRRVILCTGDIGFSASKTYDLEVWLPSYNDYKEISSCSNCTDFQARRANIRFKRDAASKPELVHTLNGSGLAVGRTFAAIVENYQNEDGTLTIPEALVPFMGGKTKIEKPIK</sequence>
<organism>
    <name type="scientific">Staphylococcus epidermidis (strain ATCC 12228 / FDA PCI 1200)</name>
    <dbReference type="NCBI Taxonomy" id="176280"/>
    <lineage>
        <taxon>Bacteria</taxon>
        <taxon>Bacillati</taxon>
        <taxon>Bacillota</taxon>
        <taxon>Bacilli</taxon>
        <taxon>Bacillales</taxon>
        <taxon>Staphylococcaceae</taxon>
        <taxon>Staphylococcus</taxon>
    </lineage>
</organism>
<gene>
    <name evidence="1" type="primary">serS</name>
    <name type="ordered locus">SE_0007</name>
</gene>
<name>SYS_STAES</name>
<dbReference type="EC" id="6.1.1.11" evidence="1"/>
<dbReference type="EMBL" id="AE015929">
    <property type="protein sequence ID" value="AAO03604.1"/>
    <property type="molecule type" value="Genomic_DNA"/>
</dbReference>
<dbReference type="RefSeq" id="NP_763562.1">
    <property type="nucleotide sequence ID" value="NC_004461.1"/>
</dbReference>
<dbReference type="RefSeq" id="WP_002485584.1">
    <property type="nucleotide sequence ID" value="NZ_WBME01000012.1"/>
</dbReference>
<dbReference type="SMR" id="Q8CU95"/>
<dbReference type="KEGG" id="sep:SE_0007"/>
<dbReference type="PATRIC" id="fig|176280.10.peg.8"/>
<dbReference type="eggNOG" id="COG0172">
    <property type="taxonomic scope" value="Bacteria"/>
</dbReference>
<dbReference type="HOGENOM" id="CLU_023797_1_1_9"/>
<dbReference type="OrthoDB" id="9804647at2"/>
<dbReference type="UniPathway" id="UPA00906">
    <property type="reaction ID" value="UER00895"/>
</dbReference>
<dbReference type="Proteomes" id="UP000001411">
    <property type="component" value="Chromosome"/>
</dbReference>
<dbReference type="GO" id="GO:0005737">
    <property type="term" value="C:cytoplasm"/>
    <property type="evidence" value="ECO:0007669"/>
    <property type="project" value="UniProtKB-SubCell"/>
</dbReference>
<dbReference type="GO" id="GO:0005524">
    <property type="term" value="F:ATP binding"/>
    <property type="evidence" value="ECO:0007669"/>
    <property type="project" value="UniProtKB-UniRule"/>
</dbReference>
<dbReference type="GO" id="GO:0140096">
    <property type="term" value="F:catalytic activity, acting on a protein"/>
    <property type="evidence" value="ECO:0007669"/>
    <property type="project" value="UniProtKB-ARBA"/>
</dbReference>
<dbReference type="GO" id="GO:0004828">
    <property type="term" value="F:serine-tRNA ligase activity"/>
    <property type="evidence" value="ECO:0007669"/>
    <property type="project" value="UniProtKB-UniRule"/>
</dbReference>
<dbReference type="GO" id="GO:0016740">
    <property type="term" value="F:transferase activity"/>
    <property type="evidence" value="ECO:0007669"/>
    <property type="project" value="UniProtKB-ARBA"/>
</dbReference>
<dbReference type="GO" id="GO:0016260">
    <property type="term" value="P:selenocysteine biosynthetic process"/>
    <property type="evidence" value="ECO:0007669"/>
    <property type="project" value="UniProtKB-UniRule"/>
</dbReference>
<dbReference type="GO" id="GO:0006434">
    <property type="term" value="P:seryl-tRNA aminoacylation"/>
    <property type="evidence" value="ECO:0007669"/>
    <property type="project" value="UniProtKB-UniRule"/>
</dbReference>
<dbReference type="CDD" id="cd00770">
    <property type="entry name" value="SerRS_core"/>
    <property type="match status" value="1"/>
</dbReference>
<dbReference type="Gene3D" id="3.30.930.10">
    <property type="entry name" value="Bira Bifunctional Protein, Domain 2"/>
    <property type="match status" value="1"/>
</dbReference>
<dbReference type="Gene3D" id="1.10.287.40">
    <property type="entry name" value="Serine-tRNA synthetase, tRNA binding domain"/>
    <property type="match status" value="1"/>
</dbReference>
<dbReference type="HAMAP" id="MF_00176">
    <property type="entry name" value="Ser_tRNA_synth_type1"/>
    <property type="match status" value="1"/>
</dbReference>
<dbReference type="InterPro" id="IPR002314">
    <property type="entry name" value="aa-tRNA-synt_IIb"/>
</dbReference>
<dbReference type="InterPro" id="IPR006195">
    <property type="entry name" value="aa-tRNA-synth_II"/>
</dbReference>
<dbReference type="InterPro" id="IPR045864">
    <property type="entry name" value="aa-tRNA-synth_II/BPL/LPL"/>
</dbReference>
<dbReference type="InterPro" id="IPR002317">
    <property type="entry name" value="Ser-tRNA-ligase_type_1"/>
</dbReference>
<dbReference type="InterPro" id="IPR015866">
    <property type="entry name" value="Ser-tRNA-synth_1_N"/>
</dbReference>
<dbReference type="InterPro" id="IPR042103">
    <property type="entry name" value="SerRS_1_N_sf"/>
</dbReference>
<dbReference type="InterPro" id="IPR033729">
    <property type="entry name" value="SerRS_core"/>
</dbReference>
<dbReference type="InterPro" id="IPR010978">
    <property type="entry name" value="tRNA-bd_arm"/>
</dbReference>
<dbReference type="NCBIfam" id="TIGR00414">
    <property type="entry name" value="serS"/>
    <property type="match status" value="1"/>
</dbReference>
<dbReference type="PANTHER" id="PTHR43697:SF1">
    <property type="entry name" value="SERINE--TRNA LIGASE"/>
    <property type="match status" value="1"/>
</dbReference>
<dbReference type="PANTHER" id="PTHR43697">
    <property type="entry name" value="SERYL-TRNA SYNTHETASE"/>
    <property type="match status" value="1"/>
</dbReference>
<dbReference type="Pfam" id="PF02403">
    <property type="entry name" value="Seryl_tRNA_N"/>
    <property type="match status" value="1"/>
</dbReference>
<dbReference type="Pfam" id="PF00587">
    <property type="entry name" value="tRNA-synt_2b"/>
    <property type="match status" value="1"/>
</dbReference>
<dbReference type="PIRSF" id="PIRSF001529">
    <property type="entry name" value="Ser-tRNA-synth_IIa"/>
    <property type="match status" value="1"/>
</dbReference>
<dbReference type="PRINTS" id="PR00981">
    <property type="entry name" value="TRNASYNTHSER"/>
</dbReference>
<dbReference type="SUPFAM" id="SSF55681">
    <property type="entry name" value="Class II aaRS and biotin synthetases"/>
    <property type="match status" value="1"/>
</dbReference>
<dbReference type="SUPFAM" id="SSF46589">
    <property type="entry name" value="tRNA-binding arm"/>
    <property type="match status" value="1"/>
</dbReference>
<dbReference type="PROSITE" id="PS50862">
    <property type="entry name" value="AA_TRNA_LIGASE_II"/>
    <property type="match status" value="1"/>
</dbReference>
<protein>
    <recommendedName>
        <fullName evidence="1">Serine--tRNA ligase</fullName>
        <ecNumber evidence="1">6.1.1.11</ecNumber>
    </recommendedName>
    <alternativeName>
        <fullName evidence="1">Seryl-tRNA synthetase</fullName>
        <shortName evidence="1">SerRS</shortName>
    </alternativeName>
    <alternativeName>
        <fullName evidence="1">Seryl-tRNA(Ser/Sec) synthetase</fullName>
    </alternativeName>
</protein>